<proteinExistence type="inferred from homology"/>
<accession>Q9C113</accession>
<name>YDI8_SCHPO</name>
<gene>
    <name type="ORF">SPAC1F8.08</name>
</gene>
<sequence length="120" mass="13875">MSTSGMLFIFATFCPCFLSCCAFMSHWKLKDFSFRFLRMCGERSLVVCYPLKLLKQIRSLFSIAIGHLSLMLIEGSANLLSLEEISRTLLRILDFVGNKNMRTYLEVPLCRWHISQARPN</sequence>
<comment type="subcellular location">
    <subcellularLocation>
        <location evidence="2">Membrane</location>
        <topology evidence="2">Single-pass membrane protein</topology>
    </subcellularLocation>
</comment>
<reference key="1">
    <citation type="journal article" date="2002" name="Nature">
        <title>The genome sequence of Schizosaccharomyces pombe.</title>
        <authorList>
            <person name="Wood V."/>
            <person name="Gwilliam R."/>
            <person name="Rajandream M.A."/>
            <person name="Lyne M.H."/>
            <person name="Lyne R."/>
            <person name="Stewart A."/>
            <person name="Sgouros J.G."/>
            <person name="Peat N."/>
            <person name="Hayles J."/>
            <person name="Baker S.G."/>
            <person name="Basham D."/>
            <person name="Bowman S."/>
            <person name="Brooks K."/>
            <person name="Brown D."/>
            <person name="Brown S."/>
            <person name="Chillingworth T."/>
            <person name="Churcher C.M."/>
            <person name="Collins M."/>
            <person name="Connor R."/>
            <person name="Cronin A."/>
            <person name="Davis P."/>
            <person name="Feltwell T."/>
            <person name="Fraser A."/>
            <person name="Gentles S."/>
            <person name="Goble A."/>
            <person name="Hamlin N."/>
            <person name="Harris D.E."/>
            <person name="Hidalgo J."/>
            <person name="Hodgson G."/>
            <person name="Holroyd S."/>
            <person name="Hornsby T."/>
            <person name="Howarth S."/>
            <person name="Huckle E.J."/>
            <person name="Hunt S."/>
            <person name="Jagels K."/>
            <person name="James K.D."/>
            <person name="Jones L."/>
            <person name="Jones M."/>
            <person name="Leather S."/>
            <person name="McDonald S."/>
            <person name="McLean J."/>
            <person name="Mooney P."/>
            <person name="Moule S."/>
            <person name="Mungall K.L."/>
            <person name="Murphy L.D."/>
            <person name="Niblett D."/>
            <person name="Odell C."/>
            <person name="Oliver K."/>
            <person name="O'Neil S."/>
            <person name="Pearson D."/>
            <person name="Quail M.A."/>
            <person name="Rabbinowitsch E."/>
            <person name="Rutherford K.M."/>
            <person name="Rutter S."/>
            <person name="Saunders D."/>
            <person name="Seeger K."/>
            <person name="Sharp S."/>
            <person name="Skelton J."/>
            <person name="Simmonds M.N."/>
            <person name="Squares R."/>
            <person name="Squares S."/>
            <person name="Stevens K."/>
            <person name="Taylor K."/>
            <person name="Taylor R.G."/>
            <person name="Tivey A."/>
            <person name="Walsh S.V."/>
            <person name="Warren T."/>
            <person name="Whitehead S."/>
            <person name="Woodward J.R."/>
            <person name="Volckaert G."/>
            <person name="Aert R."/>
            <person name="Robben J."/>
            <person name="Grymonprez B."/>
            <person name="Weltjens I."/>
            <person name="Vanstreels E."/>
            <person name="Rieger M."/>
            <person name="Schaefer M."/>
            <person name="Mueller-Auer S."/>
            <person name="Gabel C."/>
            <person name="Fuchs M."/>
            <person name="Duesterhoeft A."/>
            <person name="Fritzc C."/>
            <person name="Holzer E."/>
            <person name="Moestl D."/>
            <person name="Hilbert H."/>
            <person name="Borzym K."/>
            <person name="Langer I."/>
            <person name="Beck A."/>
            <person name="Lehrach H."/>
            <person name="Reinhardt R."/>
            <person name="Pohl T.M."/>
            <person name="Eger P."/>
            <person name="Zimmermann W."/>
            <person name="Wedler H."/>
            <person name="Wambutt R."/>
            <person name="Purnelle B."/>
            <person name="Goffeau A."/>
            <person name="Cadieu E."/>
            <person name="Dreano S."/>
            <person name="Gloux S."/>
            <person name="Lelaure V."/>
            <person name="Mottier S."/>
            <person name="Galibert F."/>
            <person name="Aves S.J."/>
            <person name="Xiang Z."/>
            <person name="Hunt C."/>
            <person name="Moore K."/>
            <person name="Hurst S.M."/>
            <person name="Lucas M."/>
            <person name="Rochet M."/>
            <person name="Gaillardin C."/>
            <person name="Tallada V.A."/>
            <person name="Garzon A."/>
            <person name="Thode G."/>
            <person name="Daga R.R."/>
            <person name="Cruzado L."/>
            <person name="Jimenez J."/>
            <person name="Sanchez M."/>
            <person name="del Rey F."/>
            <person name="Benito J."/>
            <person name="Dominguez A."/>
            <person name="Revuelta J.L."/>
            <person name="Moreno S."/>
            <person name="Armstrong J."/>
            <person name="Forsburg S.L."/>
            <person name="Cerutti L."/>
            <person name="Lowe T."/>
            <person name="McCombie W.R."/>
            <person name="Paulsen I."/>
            <person name="Potashkin J."/>
            <person name="Shpakovski G.V."/>
            <person name="Ussery D."/>
            <person name="Barrell B.G."/>
            <person name="Nurse P."/>
        </authorList>
    </citation>
    <scope>NUCLEOTIDE SEQUENCE [LARGE SCALE GENOMIC DNA]</scope>
    <source>
        <strain>972 / ATCC 24843</strain>
    </source>
</reference>
<organism>
    <name type="scientific">Schizosaccharomyces pombe (strain 972 / ATCC 24843)</name>
    <name type="common">Fission yeast</name>
    <dbReference type="NCBI Taxonomy" id="284812"/>
    <lineage>
        <taxon>Eukaryota</taxon>
        <taxon>Fungi</taxon>
        <taxon>Dikarya</taxon>
        <taxon>Ascomycota</taxon>
        <taxon>Taphrinomycotina</taxon>
        <taxon>Schizosaccharomycetes</taxon>
        <taxon>Schizosaccharomycetales</taxon>
        <taxon>Schizosaccharomycetaceae</taxon>
        <taxon>Schizosaccharomyces</taxon>
    </lineage>
</organism>
<feature type="signal peptide" evidence="1">
    <location>
        <begin position="1"/>
        <end position="22"/>
    </location>
</feature>
<feature type="chain" id="PRO_0000304004" description="Uncharacterized protein C1F8.08">
    <location>
        <begin position="23"/>
        <end position="120"/>
    </location>
</feature>
<feature type="topological domain" description="Extracellular" evidence="1">
    <location>
        <begin position="23"/>
        <end position="59"/>
    </location>
</feature>
<feature type="transmembrane region" description="Helical" evidence="1">
    <location>
        <begin position="60"/>
        <end position="80"/>
    </location>
</feature>
<feature type="topological domain" description="Cytoplasmic" evidence="1">
    <location>
        <begin position="81"/>
        <end position="120"/>
    </location>
</feature>
<dbReference type="EMBL" id="CU329670">
    <property type="protein sequence ID" value="CAC34960.1"/>
    <property type="molecule type" value="Genomic_DNA"/>
</dbReference>
<dbReference type="RefSeq" id="NP_592797.1">
    <property type="nucleotide sequence ID" value="NM_001018197.2"/>
</dbReference>
<dbReference type="PaxDb" id="4896-SPAC1F8.08.1"/>
<dbReference type="EnsemblFungi" id="SPAC1F8.08.1">
    <property type="protein sequence ID" value="SPAC1F8.08.1:pep"/>
    <property type="gene ID" value="SPAC1F8.08"/>
</dbReference>
<dbReference type="KEGG" id="spo:2541747"/>
<dbReference type="PomBase" id="SPAC1F8.08"/>
<dbReference type="VEuPathDB" id="FungiDB:SPAC1F8.08"/>
<dbReference type="HOGENOM" id="CLU_2051003_0_0_1"/>
<dbReference type="InParanoid" id="Q9C113"/>
<dbReference type="PRO" id="PR:Q9C113"/>
<dbReference type="Proteomes" id="UP000002485">
    <property type="component" value="Chromosome I"/>
</dbReference>
<dbReference type="GO" id="GO:0016020">
    <property type="term" value="C:membrane"/>
    <property type="evidence" value="ECO:0007669"/>
    <property type="project" value="UniProtKB-SubCell"/>
</dbReference>
<evidence type="ECO:0000255" key="1"/>
<evidence type="ECO:0000305" key="2"/>
<protein>
    <recommendedName>
        <fullName>Uncharacterized protein C1F8.08</fullName>
    </recommendedName>
</protein>
<keyword id="KW-0472">Membrane</keyword>
<keyword id="KW-1185">Reference proteome</keyword>
<keyword id="KW-0732">Signal</keyword>
<keyword id="KW-0812">Transmembrane</keyword>
<keyword id="KW-1133">Transmembrane helix</keyword>